<organism>
    <name type="scientific">Shigella flexneri</name>
    <dbReference type="NCBI Taxonomy" id="623"/>
    <lineage>
        <taxon>Bacteria</taxon>
        <taxon>Pseudomonadati</taxon>
        <taxon>Pseudomonadota</taxon>
        <taxon>Gammaproteobacteria</taxon>
        <taxon>Enterobacterales</taxon>
        <taxon>Enterobacteriaceae</taxon>
        <taxon>Shigella</taxon>
    </lineage>
</organism>
<sequence length="67" mass="7024">MGEISITKLLVVAALVVLLFGTKKLRTLGGDLGAAIKGFKKAMNDDDAAAKKGADVDLQAEKLSHKE</sequence>
<dbReference type="EMBL" id="AE005674">
    <property type="protein sequence ID" value="AAN42290.1"/>
    <property type="molecule type" value="Genomic_DNA"/>
</dbReference>
<dbReference type="EMBL" id="AE014073">
    <property type="protein sequence ID" value="AAP16161.1"/>
    <property type="molecule type" value="Genomic_DNA"/>
</dbReference>
<dbReference type="RefSeq" id="NP_706583.1">
    <property type="nucleotide sequence ID" value="NC_004337.2"/>
</dbReference>
<dbReference type="RefSeq" id="WP_000503931.1">
    <property type="nucleotide sequence ID" value="NZ_WPGW01000002.1"/>
</dbReference>
<dbReference type="SMR" id="P0A846"/>
<dbReference type="STRING" id="198214.SF0654"/>
<dbReference type="PaxDb" id="198214-SF0654"/>
<dbReference type="GeneID" id="1023610"/>
<dbReference type="GeneID" id="93776856"/>
<dbReference type="KEGG" id="sfl:SF0654"/>
<dbReference type="KEGG" id="sfx:S0676"/>
<dbReference type="PATRIC" id="fig|198214.7.peg.761"/>
<dbReference type="HOGENOM" id="CLU_086034_5_3_6"/>
<dbReference type="Proteomes" id="UP000001006">
    <property type="component" value="Chromosome"/>
</dbReference>
<dbReference type="Proteomes" id="UP000002673">
    <property type="component" value="Chromosome"/>
</dbReference>
<dbReference type="GO" id="GO:0033281">
    <property type="term" value="C:TAT protein transport complex"/>
    <property type="evidence" value="ECO:0007669"/>
    <property type="project" value="UniProtKB-UniRule"/>
</dbReference>
<dbReference type="GO" id="GO:0008320">
    <property type="term" value="F:protein transmembrane transporter activity"/>
    <property type="evidence" value="ECO:0007669"/>
    <property type="project" value="UniProtKB-UniRule"/>
</dbReference>
<dbReference type="GO" id="GO:0043953">
    <property type="term" value="P:protein transport by the Tat complex"/>
    <property type="evidence" value="ECO:0007669"/>
    <property type="project" value="UniProtKB-UniRule"/>
</dbReference>
<dbReference type="FunFam" id="1.20.5.3310:FF:000001">
    <property type="entry name" value="Probable Sec-independent protein translocase protein TatE"/>
    <property type="match status" value="1"/>
</dbReference>
<dbReference type="Gene3D" id="1.20.5.3310">
    <property type="match status" value="1"/>
</dbReference>
<dbReference type="HAMAP" id="MF_00236">
    <property type="entry name" value="TatA_E"/>
    <property type="match status" value="1"/>
</dbReference>
<dbReference type="HAMAP" id="MF_00903">
    <property type="entry name" value="TatE"/>
    <property type="match status" value="1"/>
</dbReference>
<dbReference type="InterPro" id="IPR003369">
    <property type="entry name" value="TatA/B/E"/>
</dbReference>
<dbReference type="InterPro" id="IPR006312">
    <property type="entry name" value="TatA/E"/>
</dbReference>
<dbReference type="InterPro" id="IPR024905">
    <property type="entry name" value="TatE"/>
</dbReference>
<dbReference type="NCBIfam" id="NF002448">
    <property type="entry name" value="PRK01614.1"/>
    <property type="match status" value="1"/>
</dbReference>
<dbReference type="NCBIfam" id="NF002960">
    <property type="entry name" value="PRK03625.1"/>
    <property type="match status" value="1"/>
</dbReference>
<dbReference type="NCBIfam" id="TIGR01411">
    <property type="entry name" value="tatAE"/>
    <property type="match status" value="1"/>
</dbReference>
<dbReference type="PANTHER" id="PTHR42982">
    <property type="entry name" value="SEC-INDEPENDENT PROTEIN TRANSLOCASE PROTEIN TATA"/>
    <property type="match status" value="1"/>
</dbReference>
<dbReference type="PANTHER" id="PTHR42982:SF5">
    <property type="entry name" value="SEC-INDEPENDENT PROTEIN TRANSLOCASE PROTEIN TATE"/>
    <property type="match status" value="1"/>
</dbReference>
<dbReference type="Pfam" id="PF02416">
    <property type="entry name" value="TatA_B_E"/>
    <property type="match status" value="1"/>
</dbReference>
<comment type="function">
    <text evidence="1">Part of the twin-arginine translocation (Tat) system that transports large folded proteins containing a characteristic twin-arginine motif in their signal peptide across membranes. TatE shares overlapping functions with TatA.</text>
</comment>
<comment type="subcellular location">
    <subcellularLocation>
        <location evidence="1">Cell inner membrane</location>
        <topology evidence="1">Single-pass membrane protein</topology>
    </subcellularLocation>
</comment>
<comment type="similarity">
    <text evidence="1">Belongs to the TatA/E family. TatE subfamily.</text>
</comment>
<accession>P0A846</accession>
<accession>P25895</accession>
<accession>P77420</accession>
<protein>
    <recommendedName>
        <fullName evidence="1">Probable Sec-independent protein translocase protein TatE</fullName>
    </recommendedName>
</protein>
<keyword id="KW-0997">Cell inner membrane</keyword>
<keyword id="KW-1003">Cell membrane</keyword>
<keyword id="KW-0472">Membrane</keyword>
<keyword id="KW-0653">Protein transport</keyword>
<keyword id="KW-1185">Reference proteome</keyword>
<keyword id="KW-0811">Translocation</keyword>
<keyword id="KW-0812">Transmembrane</keyword>
<keyword id="KW-1133">Transmembrane helix</keyword>
<keyword id="KW-0813">Transport</keyword>
<gene>
    <name evidence="1" type="primary">tatE</name>
    <name type="ordered locus">SF0654</name>
    <name type="ordered locus">S0676</name>
</gene>
<evidence type="ECO:0000255" key="1">
    <source>
        <dbReference type="HAMAP-Rule" id="MF_00903"/>
    </source>
</evidence>
<reference key="1">
    <citation type="journal article" date="2002" name="Nucleic Acids Res.">
        <title>Genome sequence of Shigella flexneri 2a: insights into pathogenicity through comparison with genomes of Escherichia coli K12 and O157.</title>
        <authorList>
            <person name="Jin Q."/>
            <person name="Yuan Z."/>
            <person name="Xu J."/>
            <person name="Wang Y."/>
            <person name="Shen Y."/>
            <person name="Lu W."/>
            <person name="Wang J."/>
            <person name="Liu H."/>
            <person name="Yang J."/>
            <person name="Yang F."/>
            <person name="Zhang X."/>
            <person name="Zhang J."/>
            <person name="Yang G."/>
            <person name="Wu H."/>
            <person name="Qu D."/>
            <person name="Dong J."/>
            <person name="Sun L."/>
            <person name="Xue Y."/>
            <person name="Zhao A."/>
            <person name="Gao Y."/>
            <person name="Zhu J."/>
            <person name="Kan B."/>
            <person name="Ding K."/>
            <person name="Chen S."/>
            <person name="Cheng H."/>
            <person name="Yao Z."/>
            <person name="He B."/>
            <person name="Chen R."/>
            <person name="Ma D."/>
            <person name="Qiang B."/>
            <person name="Wen Y."/>
            <person name="Hou Y."/>
            <person name="Yu J."/>
        </authorList>
    </citation>
    <scope>NUCLEOTIDE SEQUENCE [LARGE SCALE GENOMIC DNA]</scope>
    <source>
        <strain>301 / Serotype 2a</strain>
    </source>
</reference>
<reference key="2">
    <citation type="journal article" date="2003" name="Infect. Immun.">
        <title>Complete genome sequence and comparative genomics of Shigella flexneri serotype 2a strain 2457T.</title>
        <authorList>
            <person name="Wei J."/>
            <person name="Goldberg M.B."/>
            <person name="Burland V."/>
            <person name="Venkatesan M.M."/>
            <person name="Deng W."/>
            <person name="Fournier G."/>
            <person name="Mayhew G.F."/>
            <person name="Plunkett G. III"/>
            <person name="Rose D.J."/>
            <person name="Darling A."/>
            <person name="Mau B."/>
            <person name="Perna N.T."/>
            <person name="Payne S.M."/>
            <person name="Runyen-Janecky L.J."/>
            <person name="Zhou S."/>
            <person name="Schwartz D.C."/>
            <person name="Blattner F.R."/>
        </authorList>
    </citation>
    <scope>NUCLEOTIDE SEQUENCE [LARGE SCALE GENOMIC DNA]</scope>
    <source>
        <strain>ATCC 700930 / 2457T / Serotype 2a</strain>
    </source>
</reference>
<name>TATE_SHIFL</name>
<feature type="chain" id="PRO_0000097978" description="Probable Sec-independent protein translocase protein TatE">
    <location>
        <begin position="1"/>
        <end position="67"/>
    </location>
</feature>
<feature type="transmembrane region" description="Helical" evidence="1">
    <location>
        <begin position="4"/>
        <end position="21"/>
    </location>
</feature>
<proteinExistence type="inferred from homology"/>